<accession>P0DTG4</accession>
<organism>
    <name type="scientific">Eonycteris spelaea</name>
    <name type="common">Lesser dawn bat</name>
    <name type="synonym">Macroglossus spelaeus</name>
    <dbReference type="NCBI Taxonomy" id="58065"/>
    <lineage>
        <taxon>Eukaryota</taxon>
        <taxon>Metazoa</taxon>
        <taxon>Chordata</taxon>
        <taxon>Craniata</taxon>
        <taxon>Vertebrata</taxon>
        <taxon>Euteleostomi</taxon>
        <taxon>Mammalia</taxon>
        <taxon>Eutheria</taxon>
        <taxon>Laurasiatheria</taxon>
        <taxon>Chiroptera</taxon>
        <taxon>Yinpterochiroptera</taxon>
        <taxon>Pteropodoidea</taxon>
        <taxon>Pteropodidae</taxon>
        <taxon>Rousettinae</taxon>
        <taxon>Eonycteris</taxon>
    </lineage>
</organism>
<keyword id="KW-0445">Lipid transport</keyword>
<keyword id="KW-0964">Secreted</keyword>
<keyword id="KW-0732">Signal</keyword>
<keyword id="KW-0813">Transport</keyword>
<keyword id="KW-0850">VLDL</keyword>
<comment type="function">
    <text evidence="1 2">Inhibitor of lipoprotein binding to the low density lipoprotein (LDL) receptor, LDL receptor-related protein, and very low density lipoprotein (VLDL) receptor. Associates with high density lipoproteins (HDL) and the triacylglycerol-rich lipoproteins in the plasma and makes up about 10% of the protein of the VLDL and 2% of that of HDL. Appears to interfere directly with fatty acid uptake and is also the major plasma inhibitor of cholesteryl ester transfer protein (CETP). Binds free fatty acids and reduces their intracellular esterification. Modulates the interaction of APOE with beta-migrating VLDL and inhibits binding of beta-VLDL to the LDL receptor-related protein.</text>
</comment>
<comment type="subcellular location">
    <subcellularLocation>
        <location evidence="1">Secreted</location>
    </subcellularLocation>
</comment>
<comment type="similarity">
    <text evidence="5">Belongs to the apolipoprotein C1 family.</text>
</comment>
<gene>
    <name type="primary">APOC1</name>
</gene>
<protein>
    <recommendedName>
        <fullName>Apolipoprotein C-I</fullName>
        <shortName>Apo-CI</shortName>
        <shortName>ApoC-I</shortName>
    </recommendedName>
    <alternativeName>
        <fullName>Apolipoprotein C1</fullName>
    </alternativeName>
    <component>
        <recommendedName>
            <fullName>Truncated apolipoprotein C-I</fullName>
        </recommendedName>
    </component>
</protein>
<reference key="1">
    <citation type="journal article" date="2018" name="Gigascience">
        <title>Exploring the genome and transcriptome of the cave nectar bat Eonycteris spelaea with PacBio long-read sequencing.</title>
        <authorList>
            <person name="Wen M."/>
            <person name="Ng J.H.J."/>
            <person name="Zhu F."/>
            <person name="Chionh Y.T."/>
            <person name="Chia W.N."/>
            <person name="Mendenhall I.H."/>
            <person name="Lee B.P."/>
            <person name="Irving A.T."/>
            <person name="Wang L.F."/>
        </authorList>
    </citation>
    <scope>NUCLEOTIDE SEQUENCE [LARGE SCALE GENOMIC DNA]</scope>
</reference>
<reference key="2">
    <citation type="unpublished observations" date="2021-01">
        <authorList>
            <person name="Puppione D.L."/>
        </authorList>
    </citation>
    <scope>IDENTIFICATION</scope>
</reference>
<proteinExistence type="inferred from homology"/>
<dbReference type="EMBL" id="PUFA01000268">
    <property type="status" value="NOT_ANNOTATED_CDS"/>
    <property type="molecule type" value="Genomic_DNA"/>
</dbReference>
<dbReference type="SMR" id="P0DTG4"/>
<dbReference type="GO" id="GO:0034364">
    <property type="term" value="C:high-density lipoprotein particle"/>
    <property type="evidence" value="ECO:0007669"/>
    <property type="project" value="TreeGrafter"/>
</dbReference>
<dbReference type="GO" id="GO:0034361">
    <property type="term" value="C:very-low-density lipoprotein particle"/>
    <property type="evidence" value="ECO:0007669"/>
    <property type="project" value="UniProtKB-KW"/>
</dbReference>
<dbReference type="GO" id="GO:0005504">
    <property type="term" value="F:fatty acid binding"/>
    <property type="evidence" value="ECO:0007669"/>
    <property type="project" value="TreeGrafter"/>
</dbReference>
<dbReference type="GO" id="GO:0004859">
    <property type="term" value="F:phospholipase inhibitor activity"/>
    <property type="evidence" value="ECO:0007669"/>
    <property type="project" value="TreeGrafter"/>
</dbReference>
<dbReference type="GO" id="GO:0006869">
    <property type="term" value="P:lipid transport"/>
    <property type="evidence" value="ECO:0007669"/>
    <property type="project" value="UniProtKB-KW"/>
</dbReference>
<dbReference type="GO" id="GO:0042157">
    <property type="term" value="P:lipoprotein metabolic process"/>
    <property type="evidence" value="ECO:0007669"/>
    <property type="project" value="InterPro"/>
</dbReference>
<dbReference type="GO" id="GO:0032375">
    <property type="term" value="P:negative regulation of cholesterol transport"/>
    <property type="evidence" value="ECO:0007669"/>
    <property type="project" value="TreeGrafter"/>
</dbReference>
<dbReference type="GO" id="GO:0050995">
    <property type="term" value="P:negative regulation of lipid catabolic process"/>
    <property type="evidence" value="ECO:0007669"/>
    <property type="project" value="TreeGrafter"/>
</dbReference>
<dbReference type="GO" id="GO:0010916">
    <property type="term" value="P:negative regulation of very-low-density lipoprotein particle clearance"/>
    <property type="evidence" value="ECO:0007669"/>
    <property type="project" value="TreeGrafter"/>
</dbReference>
<dbReference type="GO" id="GO:0006641">
    <property type="term" value="P:triglyceride metabolic process"/>
    <property type="evidence" value="ECO:0007669"/>
    <property type="project" value="TreeGrafter"/>
</dbReference>
<dbReference type="GO" id="GO:0034447">
    <property type="term" value="P:very-low-density lipoprotein particle clearance"/>
    <property type="evidence" value="ECO:0007669"/>
    <property type="project" value="TreeGrafter"/>
</dbReference>
<dbReference type="Gene3D" id="4.10.260.30">
    <property type="entry name" value="Apolipoprotein C-I"/>
    <property type="match status" value="1"/>
</dbReference>
<dbReference type="InterPro" id="IPR043081">
    <property type="entry name" value="ApoC-1_sf"/>
</dbReference>
<dbReference type="InterPro" id="IPR006781">
    <property type="entry name" value="ApoC-I"/>
</dbReference>
<dbReference type="PANTHER" id="PTHR16565">
    <property type="entry name" value="APOLIPOPROTEIN C-I"/>
    <property type="match status" value="1"/>
</dbReference>
<dbReference type="PANTHER" id="PTHR16565:SF2">
    <property type="entry name" value="APOLIPOPROTEIN C-I"/>
    <property type="match status" value="1"/>
</dbReference>
<dbReference type="Pfam" id="PF04691">
    <property type="entry name" value="ApoC-I"/>
    <property type="match status" value="1"/>
</dbReference>
<sequence>MRLILSLPVLAVVLAMVLEGPAPAQAAPDISSAWESIPEKLEEFGRTVKEKVRTAIDHIKKSDFPEKTRKWFSEMFDTLKEKF</sequence>
<name>APOC1_EONSP</name>
<feature type="signal peptide" evidence="4">
    <location>
        <begin position="1"/>
        <end position="26"/>
    </location>
</feature>
<feature type="chain" id="PRO_0000452413" description="Apolipoprotein C-I">
    <location>
        <begin position="27"/>
        <end position="83"/>
    </location>
</feature>
<feature type="chain" id="PRO_0000452414" description="Truncated apolipoprotein C-I" evidence="3">
    <location>
        <begin position="29"/>
        <end position="83"/>
    </location>
</feature>
<evidence type="ECO:0000250" key="1">
    <source>
        <dbReference type="UniProtKB" id="P02654"/>
    </source>
</evidence>
<evidence type="ECO:0000250" key="2">
    <source>
        <dbReference type="UniProtKB" id="P33047"/>
    </source>
</evidence>
<evidence type="ECO:0000250" key="3">
    <source>
        <dbReference type="UniProtKB" id="P86336"/>
    </source>
</evidence>
<evidence type="ECO:0000255" key="4"/>
<evidence type="ECO:0000305" key="5"/>